<evidence type="ECO:0000255" key="1">
    <source>
        <dbReference type="HAMAP-Rule" id="MF_00436"/>
    </source>
</evidence>
<evidence type="ECO:0000255" key="2">
    <source>
        <dbReference type="PROSITE-ProRule" id="PRU01346"/>
    </source>
</evidence>
<comment type="function">
    <text evidence="1">RNA chaperone that binds small regulatory RNA (sRNAs) and mRNAs to facilitate mRNA translational regulation in response to envelope stress, environmental stress and changes in metabolite concentrations. Also binds with high specificity to tRNAs.</text>
</comment>
<comment type="subunit">
    <text evidence="1">Homohexamer.</text>
</comment>
<comment type="similarity">
    <text evidence="1">Belongs to the Hfq family.</text>
</comment>
<protein>
    <recommendedName>
        <fullName evidence="1">RNA-binding protein Hfq</fullName>
    </recommendedName>
</protein>
<reference key="1">
    <citation type="journal article" date="2011" name="Stand. Genomic Sci.">
        <title>Complete genome sequence of 'Thioalkalivibrio sulfidophilus' HL-EbGr7.</title>
        <authorList>
            <person name="Muyzer G."/>
            <person name="Sorokin D.Y."/>
            <person name="Mavromatis K."/>
            <person name="Lapidus A."/>
            <person name="Clum A."/>
            <person name="Ivanova N."/>
            <person name="Pati A."/>
            <person name="d'Haeseleer P."/>
            <person name="Woyke T."/>
            <person name="Kyrpides N.C."/>
        </authorList>
    </citation>
    <scope>NUCLEOTIDE SEQUENCE [LARGE SCALE GENOMIC DNA]</scope>
    <source>
        <strain>HL-EbGR7</strain>
    </source>
</reference>
<proteinExistence type="inferred from homology"/>
<keyword id="KW-1185">Reference proteome</keyword>
<keyword id="KW-0694">RNA-binding</keyword>
<keyword id="KW-0346">Stress response</keyword>
<organism>
    <name type="scientific">Thioalkalivibrio sulfidiphilus (strain HL-EbGR7)</name>
    <dbReference type="NCBI Taxonomy" id="396588"/>
    <lineage>
        <taxon>Bacteria</taxon>
        <taxon>Pseudomonadati</taxon>
        <taxon>Pseudomonadota</taxon>
        <taxon>Gammaproteobacteria</taxon>
        <taxon>Chromatiales</taxon>
        <taxon>Ectothiorhodospiraceae</taxon>
        <taxon>Thioalkalivibrio</taxon>
    </lineage>
</organism>
<gene>
    <name evidence="1" type="primary">hfq</name>
    <name type="ordered locus">Tgr7_0897</name>
</gene>
<dbReference type="EMBL" id="CP001339">
    <property type="protein sequence ID" value="ACL71988.1"/>
    <property type="molecule type" value="Genomic_DNA"/>
</dbReference>
<dbReference type="RefSeq" id="WP_012637476.1">
    <property type="nucleotide sequence ID" value="NC_011901.1"/>
</dbReference>
<dbReference type="SMR" id="B8GNC7"/>
<dbReference type="STRING" id="396588.Tgr7_0897"/>
<dbReference type="KEGG" id="tgr:Tgr7_0897"/>
<dbReference type="eggNOG" id="COG1923">
    <property type="taxonomic scope" value="Bacteria"/>
</dbReference>
<dbReference type="HOGENOM" id="CLU_113688_2_2_6"/>
<dbReference type="OrthoDB" id="9799751at2"/>
<dbReference type="Proteomes" id="UP000002383">
    <property type="component" value="Chromosome"/>
</dbReference>
<dbReference type="GO" id="GO:0005829">
    <property type="term" value="C:cytosol"/>
    <property type="evidence" value="ECO:0007669"/>
    <property type="project" value="TreeGrafter"/>
</dbReference>
<dbReference type="GO" id="GO:0003723">
    <property type="term" value="F:RNA binding"/>
    <property type="evidence" value="ECO:0007669"/>
    <property type="project" value="UniProtKB-UniRule"/>
</dbReference>
<dbReference type="GO" id="GO:0006355">
    <property type="term" value="P:regulation of DNA-templated transcription"/>
    <property type="evidence" value="ECO:0007669"/>
    <property type="project" value="InterPro"/>
</dbReference>
<dbReference type="GO" id="GO:0043487">
    <property type="term" value="P:regulation of RNA stability"/>
    <property type="evidence" value="ECO:0007669"/>
    <property type="project" value="TreeGrafter"/>
</dbReference>
<dbReference type="GO" id="GO:0045974">
    <property type="term" value="P:regulation of translation, ncRNA-mediated"/>
    <property type="evidence" value="ECO:0007669"/>
    <property type="project" value="TreeGrafter"/>
</dbReference>
<dbReference type="CDD" id="cd01716">
    <property type="entry name" value="Hfq"/>
    <property type="match status" value="1"/>
</dbReference>
<dbReference type="FunFam" id="2.30.30.100:FF:000001">
    <property type="entry name" value="RNA-binding protein Hfq"/>
    <property type="match status" value="1"/>
</dbReference>
<dbReference type="Gene3D" id="2.30.30.100">
    <property type="match status" value="1"/>
</dbReference>
<dbReference type="HAMAP" id="MF_00436">
    <property type="entry name" value="Hfq"/>
    <property type="match status" value="1"/>
</dbReference>
<dbReference type="InterPro" id="IPR005001">
    <property type="entry name" value="Hfq"/>
</dbReference>
<dbReference type="InterPro" id="IPR010920">
    <property type="entry name" value="LSM_dom_sf"/>
</dbReference>
<dbReference type="InterPro" id="IPR047575">
    <property type="entry name" value="Sm"/>
</dbReference>
<dbReference type="NCBIfam" id="TIGR02383">
    <property type="entry name" value="Hfq"/>
    <property type="match status" value="1"/>
</dbReference>
<dbReference type="NCBIfam" id="NF001602">
    <property type="entry name" value="PRK00395.1"/>
    <property type="match status" value="1"/>
</dbReference>
<dbReference type="PANTHER" id="PTHR34772">
    <property type="entry name" value="RNA-BINDING PROTEIN HFQ"/>
    <property type="match status" value="1"/>
</dbReference>
<dbReference type="PANTHER" id="PTHR34772:SF1">
    <property type="entry name" value="RNA-BINDING PROTEIN HFQ"/>
    <property type="match status" value="1"/>
</dbReference>
<dbReference type="Pfam" id="PF17209">
    <property type="entry name" value="Hfq"/>
    <property type="match status" value="1"/>
</dbReference>
<dbReference type="SUPFAM" id="SSF50182">
    <property type="entry name" value="Sm-like ribonucleoproteins"/>
    <property type="match status" value="1"/>
</dbReference>
<dbReference type="PROSITE" id="PS52002">
    <property type="entry name" value="SM"/>
    <property type="match status" value="1"/>
</dbReference>
<name>HFQ_THISH</name>
<sequence>MSKGQTLQEPFLNALRKERIPVSIYLVNGIKLQGQIDSFDQFVVLLKNTVSQMVYKHAISTIVPSRPVKLAMPEDMQPED</sequence>
<accession>B8GNC7</accession>
<feature type="chain" id="PRO_1000135043" description="RNA-binding protein Hfq">
    <location>
        <begin position="1"/>
        <end position="80"/>
    </location>
</feature>
<feature type="domain" description="Sm" evidence="2">
    <location>
        <begin position="9"/>
        <end position="68"/>
    </location>
</feature>